<comment type="function">
    <text evidence="1">Succinyl-CoA synthetase functions in the citric acid cycle (TCA), coupling the hydrolysis of succinyl-CoA to the synthesis of either ATP or GTP and thus represents the only step of substrate-level phosphorylation in the TCA. The beta subunit provides nucleotide specificity of the enzyme and binds the substrate succinate, while the binding sites for coenzyme A and phosphate are found in the alpha subunit.</text>
</comment>
<comment type="catalytic activity">
    <reaction evidence="1">
        <text>succinate + ATP + CoA = succinyl-CoA + ADP + phosphate</text>
        <dbReference type="Rhea" id="RHEA:17661"/>
        <dbReference type="ChEBI" id="CHEBI:30031"/>
        <dbReference type="ChEBI" id="CHEBI:30616"/>
        <dbReference type="ChEBI" id="CHEBI:43474"/>
        <dbReference type="ChEBI" id="CHEBI:57287"/>
        <dbReference type="ChEBI" id="CHEBI:57292"/>
        <dbReference type="ChEBI" id="CHEBI:456216"/>
        <dbReference type="EC" id="6.2.1.5"/>
    </reaction>
    <physiologicalReaction direction="right-to-left" evidence="1">
        <dbReference type="Rhea" id="RHEA:17663"/>
    </physiologicalReaction>
</comment>
<comment type="catalytic activity">
    <reaction evidence="1">
        <text>GTP + succinate + CoA = succinyl-CoA + GDP + phosphate</text>
        <dbReference type="Rhea" id="RHEA:22120"/>
        <dbReference type="ChEBI" id="CHEBI:30031"/>
        <dbReference type="ChEBI" id="CHEBI:37565"/>
        <dbReference type="ChEBI" id="CHEBI:43474"/>
        <dbReference type="ChEBI" id="CHEBI:57287"/>
        <dbReference type="ChEBI" id="CHEBI:57292"/>
        <dbReference type="ChEBI" id="CHEBI:58189"/>
    </reaction>
    <physiologicalReaction direction="right-to-left" evidence="1">
        <dbReference type="Rhea" id="RHEA:22122"/>
    </physiologicalReaction>
</comment>
<comment type="cofactor">
    <cofactor evidence="1">
        <name>Mg(2+)</name>
        <dbReference type="ChEBI" id="CHEBI:18420"/>
    </cofactor>
    <text evidence="1">Binds 1 Mg(2+) ion per subunit.</text>
</comment>
<comment type="pathway">
    <text evidence="1">Carbohydrate metabolism; tricarboxylic acid cycle; succinate from succinyl-CoA (ligase route): step 1/1.</text>
</comment>
<comment type="subunit">
    <text evidence="1">Heterotetramer of two alpha and two beta subunits.</text>
</comment>
<comment type="similarity">
    <text evidence="1">Belongs to the succinate/malate CoA ligase beta subunit family.</text>
</comment>
<proteinExistence type="inferred from homology"/>
<feature type="chain" id="PRO_1000082200" description="Succinate--CoA ligase [ADP-forming] subunit beta">
    <location>
        <begin position="1"/>
        <end position="385"/>
    </location>
</feature>
<feature type="domain" description="ATP-grasp" evidence="1">
    <location>
        <begin position="9"/>
        <end position="244"/>
    </location>
</feature>
<feature type="binding site" evidence="1">
    <location>
        <position position="46"/>
    </location>
    <ligand>
        <name>ATP</name>
        <dbReference type="ChEBI" id="CHEBI:30616"/>
    </ligand>
</feature>
<feature type="binding site" evidence="1">
    <location>
        <begin position="53"/>
        <end position="55"/>
    </location>
    <ligand>
        <name>ATP</name>
        <dbReference type="ChEBI" id="CHEBI:30616"/>
    </ligand>
</feature>
<feature type="binding site" evidence="1">
    <location>
        <position position="99"/>
    </location>
    <ligand>
        <name>ATP</name>
        <dbReference type="ChEBI" id="CHEBI:30616"/>
    </ligand>
</feature>
<feature type="binding site" evidence="1">
    <location>
        <position position="102"/>
    </location>
    <ligand>
        <name>ATP</name>
        <dbReference type="ChEBI" id="CHEBI:30616"/>
    </ligand>
</feature>
<feature type="binding site" evidence="1">
    <location>
        <position position="107"/>
    </location>
    <ligand>
        <name>ATP</name>
        <dbReference type="ChEBI" id="CHEBI:30616"/>
    </ligand>
</feature>
<feature type="binding site" evidence="1">
    <location>
        <position position="199"/>
    </location>
    <ligand>
        <name>Mg(2+)</name>
        <dbReference type="ChEBI" id="CHEBI:18420"/>
    </ligand>
</feature>
<feature type="binding site" evidence="1">
    <location>
        <position position="213"/>
    </location>
    <ligand>
        <name>Mg(2+)</name>
        <dbReference type="ChEBI" id="CHEBI:18420"/>
    </ligand>
</feature>
<feature type="binding site" evidence="1">
    <location>
        <position position="264"/>
    </location>
    <ligand>
        <name>substrate</name>
        <note>ligand shared with subunit alpha</note>
    </ligand>
</feature>
<feature type="binding site" evidence="1">
    <location>
        <begin position="321"/>
        <end position="323"/>
    </location>
    <ligand>
        <name>substrate</name>
        <note>ligand shared with subunit alpha</note>
    </ligand>
</feature>
<organism>
    <name type="scientific">Rickettsia bellii (strain OSU 85-389)</name>
    <dbReference type="NCBI Taxonomy" id="391896"/>
    <lineage>
        <taxon>Bacteria</taxon>
        <taxon>Pseudomonadati</taxon>
        <taxon>Pseudomonadota</taxon>
        <taxon>Alphaproteobacteria</taxon>
        <taxon>Rickettsiales</taxon>
        <taxon>Rickettsiaceae</taxon>
        <taxon>Rickettsieae</taxon>
        <taxon>Rickettsia</taxon>
        <taxon>belli group</taxon>
    </lineage>
</organism>
<evidence type="ECO:0000255" key="1">
    <source>
        <dbReference type="HAMAP-Rule" id="MF_00558"/>
    </source>
</evidence>
<sequence length="385" mass="41593">MNIHEYQAKEILRKYGVPTSTGVVVTKTESINAAIDKLNTKVYVVKAQIHAGGRGKAGGVKVVKSKEEAKKVAHDMFGINLVTHQTGPQGQKVNRLYIESGCDILKEYYFSVVFDRSASCITFIASTEGGVDIEEVAEKTPEKIIKFSVDPATGLQNFHAQGIAYELGFKDHQVKQMKEIVKATYKAFIETDAAQIEINPLIVNKEGNLLALDAKFTFDDNGLFKHPEIMALRDQDEEDPLETRAADAGLSYVKMDGSIGCMVNGAGLAMATMDIIKLYGATPANFLDVGGGADRERVKEALKIILSDKEVKGILVNIFGGIMRCDIIAEGIIAAAKDIGIKVPLVVRLAGTNVEKGKEILSNSGLEIIPAHDLADAASKIVEAI</sequence>
<dbReference type="EC" id="6.2.1.5" evidence="1"/>
<dbReference type="EMBL" id="CP000849">
    <property type="protein sequence ID" value="ABV78617.1"/>
    <property type="molecule type" value="Genomic_DNA"/>
</dbReference>
<dbReference type="RefSeq" id="WP_012151578.1">
    <property type="nucleotide sequence ID" value="NC_009883.1"/>
</dbReference>
<dbReference type="SMR" id="A8GUV0"/>
<dbReference type="KEGG" id="rbo:A1I_01105"/>
<dbReference type="HOGENOM" id="CLU_037430_0_2_5"/>
<dbReference type="UniPathway" id="UPA00223">
    <property type="reaction ID" value="UER00999"/>
</dbReference>
<dbReference type="GO" id="GO:0005829">
    <property type="term" value="C:cytosol"/>
    <property type="evidence" value="ECO:0007669"/>
    <property type="project" value="TreeGrafter"/>
</dbReference>
<dbReference type="GO" id="GO:0042709">
    <property type="term" value="C:succinate-CoA ligase complex"/>
    <property type="evidence" value="ECO:0007669"/>
    <property type="project" value="TreeGrafter"/>
</dbReference>
<dbReference type="GO" id="GO:0005524">
    <property type="term" value="F:ATP binding"/>
    <property type="evidence" value="ECO:0007669"/>
    <property type="project" value="UniProtKB-UniRule"/>
</dbReference>
<dbReference type="GO" id="GO:0000287">
    <property type="term" value="F:magnesium ion binding"/>
    <property type="evidence" value="ECO:0007669"/>
    <property type="project" value="UniProtKB-UniRule"/>
</dbReference>
<dbReference type="GO" id="GO:0004775">
    <property type="term" value="F:succinate-CoA ligase (ADP-forming) activity"/>
    <property type="evidence" value="ECO:0007669"/>
    <property type="project" value="UniProtKB-UniRule"/>
</dbReference>
<dbReference type="GO" id="GO:0004776">
    <property type="term" value="F:succinate-CoA ligase (GDP-forming) activity"/>
    <property type="evidence" value="ECO:0007669"/>
    <property type="project" value="RHEA"/>
</dbReference>
<dbReference type="GO" id="GO:0006104">
    <property type="term" value="P:succinyl-CoA metabolic process"/>
    <property type="evidence" value="ECO:0007669"/>
    <property type="project" value="TreeGrafter"/>
</dbReference>
<dbReference type="GO" id="GO:0006099">
    <property type="term" value="P:tricarboxylic acid cycle"/>
    <property type="evidence" value="ECO:0007669"/>
    <property type="project" value="UniProtKB-UniRule"/>
</dbReference>
<dbReference type="FunFam" id="3.30.1490.20:FF:000002">
    <property type="entry name" value="Succinate--CoA ligase [ADP-forming] subunit beta"/>
    <property type="match status" value="1"/>
</dbReference>
<dbReference type="FunFam" id="3.30.470.20:FF:000002">
    <property type="entry name" value="Succinate--CoA ligase [ADP-forming] subunit beta"/>
    <property type="match status" value="1"/>
</dbReference>
<dbReference type="FunFam" id="3.40.50.261:FF:000001">
    <property type="entry name" value="Succinate--CoA ligase [ADP-forming] subunit beta"/>
    <property type="match status" value="1"/>
</dbReference>
<dbReference type="Gene3D" id="3.30.1490.20">
    <property type="entry name" value="ATP-grasp fold, A domain"/>
    <property type="match status" value="1"/>
</dbReference>
<dbReference type="Gene3D" id="3.30.470.20">
    <property type="entry name" value="ATP-grasp fold, B domain"/>
    <property type="match status" value="1"/>
</dbReference>
<dbReference type="Gene3D" id="3.40.50.261">
    <property type="entry name" value="Succinyl-CoA synthetase domains"/>
    <property type="match status" value="1"/>
</dbReference>
<dbReference type="HAMAP" id="MF_00558">
    <property type="entry name" value="Succ_CoA_beta"/>
    <property type="match status" value="1"/>
</dbReference>
<dbReference type="InterPro" id="IPR011761">
    <property type="entry name" value="ATP-grasp"/>
</dbReference>
<dbReference type="InterPro" id="IPR013650">
    <property type="entry name" value="ATP-grasp_succ-CoA_synth-type"/>
</dbReference>
<dbReference type="InterPro" id="IPR013815">
    <property type="entry name" value="ATP_grasp_subdomain_1"/>
</dbReference>
<dbReference type="InterPro" id="IPR017866">
    <property type="entry name" value="Succ-CoA_synthase_bsu_CS"/>
</dbReference>
<dbReference type="InterPro" id="IPR005811">
    <property type="entry name" value="SUCC_ACL_C"/>
</dbReference>
<dbReference type="InterPro" id="IPR005809">
    <property type="entry name" value="Succ_CoA_ligase-like_bsu"/>
</dbReference>
<dbReference type="InterPro" id="IPR016102">
    <property type="entry name" value="Succinyl-CoA_synth-like"/>
</dbReference>
<dbReference type="NCBIfam" id="NF001913">
    <property type="entry name" value="PRK00696.1"/>
    <property type="match status" value="1"/>
</dbReference>
<dbReference type="NCBIfam" id="TIGR01016">
    <property type="entry name" value="sucCoAbeta"/>
    <property type="match status" value="1"/>
</dbReference>
<dbReference type="PANTHER" id="PTHR11815:SF10">
    <property type="entry name" value="SUCCINATE--COA LIGASE [GDP-FORMING] SUBUNIT BETA, MITOCHONDRIAL"/>
    <property type="match status" value="1"/>
</dbReference>
<dbReference type="PANTHER" id="PTHR11815">
    <property type="entry name" value="SUCCINYL-COA SYNTHETASE BETA CHAIN"/>
    <property type="match status" value="1"/>
</dbReference>
<dbReference type="Pfam" id="PF08442">
    <property type="entry name" value="ATP-grasp_2"/>
    <property type="match status" value="1"/>
</dbReference>
<dbReference type="Pfam" id="PF00549">
    <property type="entry name" value="Ligase_CoA"/>
    <property type="match status" value="1"/>
</dbReference>
<dbReference type="PIRSF" id="PIRSF001554">
    <property type="entry name" value="SucCS_beta"/>
    <property type="match status" value="1"/>
</dbReference>
<dbReference type="SUPFAM" id="SSF56059">
    <property type="entry name" value="Glutathione synthetase ATP-binding domain-like"/>
    <property type="match status" value="1"/>
</dbReference>
<dbReference type="SUPFAM" id="SSF52210">
    <property type="entry name" value="Succinyl-CoA synthetase domains"/>
    <property type="match status" value="1"/>
</dbReference>
<dbReference type="PROSITE" id="PS50975">
    <property type="entry name" value="ATP_GRASP"/>
    <property type="match status" value="1"/>
</dbReference>
<dbReference type="PROSITE" id="PS01217">
    <property type="entry name" value="SUCCINYL_COA_LIG_3"/>
    <property type="match status" value="1"/>
</dbReference>
<gene>
    <name evidence="1" type="primary">sucC</name>
    <name type="ordered locus">A1I_01105</name>
</gene>
<keyword id="KW-0067">ATP-binding</keyword>
<keyword id="KW-0436">Ligase</keyword>
<keyword id="KW-0460">Magnesium</keyword>
<keyword id="KW-0479">Metal-binding</keyword>
<keyword id="KW-0547">Nucleotide-binding</keyword>
<keyword id="KW-0816">Tricarboxylic acid cycle</keyword>
<reference key="1">
    <citation type="submission" date="2007-09" db="EMBL/GenBank/DDBJ databases">
        <title>Complete genome sequencing of Rickettsia bellii.</title>
        <authorList>
            <person name="Madan A."/>
            <person name="Lee H."/>
            <person name="Madan A."/>
            <person name="Yoon J.-G."/>
            <person name="Ryu G.-Y."/>
            <person name="Dasch G."/>
            <person name="Ereemeva M."/>
        </authorList>
    </citation>
    <scope>NUCLEOTIDE SEQUENCE [LARGE SCALE GENOMIC DNA]</scope>
    <source>
        <strain>OSU 85-389</strain>
    </source>
</reference>
<protein>
    <recommendedName>
        <fullName evidence="1">Succinate--CoA ligase [ADP-forming] subunit beta</fullName>
        <ecNumber evidence="1">6.2.1.5</ecNumber>
    </recommendedName>
    <alternativeName>
        <fullName evidence="1">Succinyl-CoA synthetase subunit beta</fullName>
        <shortName evidence="1">SCS-beta</shortName>
    </alternativeName>
</protein>
<name>SUCC_RICB8</name>
<accession>A8GUV0</accession>